<reference key="1">
    <citation type="submission" date="1998-06" db="EMBL/GenBank/DDBJ databases">
        <title>The Caulobacter major chemotaxis operon.</title>
        <authorList>
            <person name="Alley M.R.K."/>
        </authorList>
    </citation>
    <scope>NUCLEOTIDE SEQUENCE [GENOMIC DNA]</scope>
    <source>
        <strain>ATCC 19089 / CIP 103742 / CB 15</strain>
    </source>
</reference>
<reference key="2">
    <citation type="journal article" date="2001" name="Proc. Natl. Acad. Sci. U.S.A.">
        <title>Complete genome sequence of Caulobacter crescentus.</title>
        <authorList>
            <person name="Nierman W.C."/>
            <person name="Feldblyum T.V."/>
            <person name="Laub M.T."/>
            <person name="Paulsen I.T."/>
            <person name="Nelson K.E."/>
            <person name="Eisen J.A."/>
            <person name="Heidelberg J.F."/>
            <person name="Alley M.R.K."/>
            <person name="Ohta N."/>
            <person name="Maddock J.R."/>
            <person name="Potocka I."/>
            <person name="Nelson W.C."/>
            <person name="Newton A."/>
            <person name="Stephens C."/>
            <person name="Phadke N.D."/>
            <person name="Ely B."/>
            <person name="DeBoy R.T."/>
            <person name="Dodson R.J."/>
            <person name="Durkin A.S."/>
            <person name="Gwinn M.L."/>
            <person name="Haft D.H."/>
            <person name="Kolonay J.F."/>
            <person name="Smit J."/>
            <person name="Craven M.B."/>
            <person name="Khouri H.M."/>
            <person name="Shetty J."/>
            <person name="Berry K.J."/>
            <person name="Utterback T.R."/>
            <person name="Tran K."/>
            <person name="Wolf A.M."/>
            <person name="Vamathevan J.J."/>
            <person name="Ermolaeva M.D."/>
            <person name="White O."/>
            <person name="Salzberg S.L."/>
            <person name="Venter J.C."/>
            <person name="Shapiro L."/>
            <person name="Fraser C.M."/>
        </authorList>
    </citation>
    <scope>NUCLEOTIDE SEQUENCE [LARGE SCALE GENOMIC DNA]</scope>
    <source>
        <strain>ATCC 19089 / CIP 103742 / CB 15</strain>
    </source>
</reference>
<proteinExistence type="inferred from homology"/>
<accession>O87717</accession>
<dbReference type="EC" id="3.1.1.61" evidence="1"/>
<dbReference type="EC" id="3.5.1.44" evidence="1"/>
<dbReference type="EMBL" id="AJ006687">
    <property type="protein sequence ID" value="CAA07180.1"/>
    <property type="molecule type" value="Genomic_DNA"/>
</dbReference>
<dbReference type="EMBL" id="AE005673">
    <property type="protein sequence ID" value="AAK22423.1"/>
    <property type="molecule type" value="Genomic_DNA"/>
</dbReference>
<dbReference type="PIR" id="C87303">
    <property type="entry name" value="C87303"/>
</dbReference>
<dbReference type="RefSeq" id="NP_419255.1">
    <property type="nucleotide sequence ID" value="NC_002696.2"/>
</dbReference>
<dbReference type="RefSeq" id="WP_010918324.1">
    <property type="nucleotide sequence ID" value="NC_002696.2"/>
</dbReference>
<dbReference type="SMR" id="O87717"/>
<dbReference type="STRING" id="190650.CC_0436"/>
<dbReference type="EnsemblBacteria" id="AAK22423">
    <property type="protein sequence ID" value="AAK22423"/>
    <property type="gene ID" value="CC_0436"/>
</dbReference>
<dbReference type="KEGG" id="ccr:CC_0436"/>
<dbReference type="PATRIC" id="fig|190650.5.peg.441"/>
<dbReference type="eggNOG" id="COG2201">
    <property type="taxonomic scope" value="Bacteria"/>
</dbReference>
<dbReference type="HOGENOM" id="CLU_000445_51_0_5"/>
<dbReference type="BioCyc" id="CAULO:CC0436-MONOMER"/>
<dbReference type="Proteomes" id="UP000001816">
    <property type="component" value="Chromosome"/>
</dbReference>
<dbReference type="GO" id="GO:0005737">
    <property type="term" value="C:cytoplasm"/>
    <property type="evidence" value="ECO:0007669"/>
    <property type="project" value="UniProtKB-SubCell"/>
</dbReference>
<dbReference type="GO" id="GO:0000156">
    <property type="term" value="F:phosphorelay response regulator activity"/>
    <property type="evidence" value="ECO:0007669"/>
    <property type="project" value="InterPro"/>
</dbReference>
<dbReference type="GO" id="GO:0008984">
    <property type="term" value="F:protein-glutamate methylesterase activity"/>
    <property type="evidence" value="ECO:0007669"/>
    <property type="project" value="UniProtKB-UniRule"/>
</dbReference>
<dbReference type="GO" id="GO:0050568">
    <property type="term" value="F:protein-glutamine glutaminase activity"/>
    <property type="evidence" value="ECO:0007669"/>
    <property type="project" value="UniProtKB-UniRule"/>
</dbReference>
<dbReference type="GO" id="GO:0006935">
    <property type="term" value="P:chemotaxis"/>
    <property type="evidence" value="ECO:0007669"/>
    <property type="project" value="UniProtKB-UniRule"/>
</dbReference>
<dbReference type="CDD" id="cd16432">
    <property type="entry name" value="CheB_Rec"/>
    <property type="match status" value="1"/>
</dbReference>
<dbReference type="CDD" id="cd17541">
    <property type="entry name" value="REC_CheB-like"/>
    <property type="match status" value="1"/>
</dbReference>
<dbReference type="Gene3D" id="3.40.50.2300">
    <property type="match status" value="1"/>
</dbReference>
<dbReference type="Gene3D" id="3.40.50.180">
    <property type="entry name" value="Methylesterase CheB, C-terminal domain"/>
    <property type="match status" value="1"/>
</dbReference>
<dbReference type="HAMAP" id="MF_00099">
    <property type="entry name" value="CheB_chemtxs"/>
    <property type="match status" value="1"/>
</dbReference>
<dbReference type="InterPro" id="IPR008248">
    <property type="entry name" value="CheB-like"/>
</dbReference>
<dbReference type="InterPro" id="IPR035909">
    <property type="entry name" value="CheB_C"/>
</dbReference>
<dbReference type="InterPro" id="IPR011006">
    <property type="entry name" value="CheY-like_superfamily"/>
</dbReference>
<dbReference type="InterPro" id="IPR000673">
    <property type="entry name" value="Sig_transdc_resp-reg_Me-estase"/>
</dbReference>
<dbReference type="InterPro" id="IPR001789">
    <property type="entry name" value="Sig_transdc_resp-reg_receiver"/>
</dbReference>
<dbReference type="NCBIfam" id="NF001965">
    <property type="entry name" value="PRK00742.1"/>
    <property type="match status" value="1"/>
</dbReference>
<dbReference type="NCBIfam" id="NF009206">
    <property type="entry name" value="PRK12555.1"/>
    <property type="match status" value="1"/>
</dbReference>
<dbReference type="PANTHER" id="PTHR42872">
    <property type="entry name" value="PROTEIN-GLUTAMATE METHYLESTERASE/PROTEIN-GLUTAMINE GLUTAMINASE"/>
    <property type="match status" value="1"/>
</dbReference>
<dbReference type="PANTHER" id="PTHR42872:SF6">
    <property type="entry name" value="PROTEIN-GLUTAMATE METHYLESTERASE_PROTEIN-GLUTAMINE GLUTAMINASE"/>
    <property type="match status" value="1"/>
</dbReference>
<dbReference type="Pfam" id="PF01339">
    <property type="entry name" value="CheB_methylest"/>
    <property type="match status" value="1"/>
</dbReference>
<dbReference type="Pfam" id="PF00072">
    <property type="entry name" value="Response_reg"/>
    <property type="match status" value="1"/>
</dbReference>
<dbReference type="PIRSF" id="PIRSF000876">
    <property type="entry name" value="RR_chemtxs_CheB"/>
    <property type="match status" value="1"/>
</dbReference>
<dbReference type="SMART" id="SM00448">
    <property type="entry name" value="REC"/>
    <property type="match status" value="1"/>
</dbReference>
<dbReference type="SUPFAM" id="SSF52172">
    <property type="entry name" value="CheY-like"/>
    <property type="match status" value="1"/>
</dbReference>
<dbReference type="SUPFAM" id="SSF52738">
    <property type="entry name" value="Methylesterase CheB, C-terminal domain"/>
    <property type="match status" value="1"/>
</dbReference>
<dbReference type="PROSITE" id="PS50122">
    <property type="entry name" value="CHEB"/>
    <property type="match status" value="1"/>
</dbReference>
<dbReference type="PROSITE" id="PS50110">
    <property type="entry name" value="RESPONSE_REGULATORY"/>
    <property type="match status" value="1"/>
</dbReference>
<comment type="function">
    <text evidence="1">Involved in chemotaxis. Part of a chemotaxis signal transduction system that modulates chemotaxis in response to various stimuli. Catalyzes the demethylation of specific methylglutamate residues introduced into the chemoreceptors (methyl-accepting chemotaxis proteins or MCP) by CheR. Also mediates the irreversible deamidation of specific glutamine residues to glutamic acid.</text>
</comment>
<comment type="catalytic activity">
    <reaction evidence="1">
        <text>[protein]-L-glutamate 5-O-methyl ester + H2O = L-glutamyl-[protein] + methanol + H(+)</text>
        <dbReference type="Rhea" id="RHEA:23236"/>
        <dbReference type="Rhea" id="RHEA-COMP:10208"/>
        <dbReference type="Rhea" id="RHEA-COMP:10311"/>
        <dbReference type="ChEBI" id="CHEBI:15377"/>
        <dbReference type="ChEBI" id="CHEBI:15378"/>
        <dbReference type="ChEBI" id="CHEBI:17790"/>
        <dbReference type="ChEBI" id="CHEBI:29973"/>
        <dbReference type="ChEBI" id="CHEBI:82795"/>
        <dbReference type="EC" id="3.1.1.61"/>
    </reaction>
</comment>
<comment type="catalytic activity">
    <reaction evidence="1">
        <text>L-glutaminyl-[protein] + H2O = L-glutamyl-[protein] + NH4(+)</text>
        <dbReference type="Rhea" id="RHEA:16441"/>
        <dbReference type="Rhea" id="RHEA-COMP:10207"/>
        <dbReference type="Rhea" id="RHEA-COMP:10208"/>
        <dbReference type="ChEBI" id="CHEBI:15377"/>
        <dbReference type="ChEBI" id="CHEBI:28938"/>
        <dbReference type="ChEBI" id="CHEBI:29973"/>
        <dbReference type="ChEBI" id="CHEBI:30011"/>
        <dbReference type="EC" id="3.5.1.44"/>
    </reaction>
</comment>
<comment type="subcellular location">
    <subcellularLocation>
        <location evidence="1">Cytoplasm</location>
    </subcellularLocation>
</comment>
<comment type="domain">
    <text evidence="1">Contains a C-terminal catalytic domain, and an N-terminal region which modulates catalytic activity.</text>
</comment>
<comment type="PTM">
    <text evidence="1">Phosphorylated by CheA. Phosphorylation of the N-terminal regulatory domain activates the methylesterase activity.</text>
</comment>
<comment type="similarity">
    <text evidence="1">Belongs to the CheB family.</text>
</comment>
<gene>
    <name evidence="1" type="primary">cheB1</name>
    <name type="ordered locus">CC_0436</name>
</gene>
<name>CHEB1_CAUVC</name>
<keyword id="KW-0145">Chemotaxis</keyword>
<keyword id="KW-0963">Cytoplasm</keyword>
<keyword id="KW-0378">Hydrolase</keyword>
<keyword id="KW-0597">Phosphoprotein</keyword>
<keyword id="KW-1185">Reference proteome</keyword>
<protein>
    <recommendedName>
        <fullName evidence="1">Protein-glutamate methylesterase/protein-glutamine glutaminase 1</fullName>
        <ecNumber evidence="1">3.1.1.61</ecNumber>
        <ecNumber evidence="1">3.5.1.44</ecNumber>
    </recommendedName>
</protein>
<evidence type="ECO:0000255" key="1">
    <source>
        <dbReference type="HAMAP-Rule" id="MF_00099"/>
    </source>
</evidence>
<feature type="chain" id="PRO_0000157984" description="Protein-glutamate methylesterase/protein-glutamine glutaminase 1">
    <location>
        <begin position="1"/>
        <end position="344"/>
    </location>
</feature>
<feature type="domain" description="Response regulatory" evidence="1">
    <location>
        <begin position="5"/>
        <end position="122"/>
    </location>
</feature>
<feature type="domain" description="CheB-type methylesterase" evidence="1">
    <location>
        <begin position="151"/>
        <end position="343"/>
    </location>
</feature>
<feature type="active site" evidence="1">
    <location>
        <position position="163"/>
    </location>
</feature>
<feature type="active site" evidence="1">
    <location>
        <position position="189"/>
    </location>
</feature>
<feature type="active site" evidence="1">
    <location>
        <position position="285"/>
    </location>
</feature>
<feature type="modified residue" description="4-aspartylphosphate" evidence="1">
    <location>
        <position position="56"/>
    </location>
</feature>
<organism>
    <name type="scientific">Caulobacter vibrioides (strain ATCC 19089 / CIP 103742 / CB 15)</name>
    <name type="common">Caulobacter crescentus</name>
    <dbReference type="NCBI Taxonomy" id="190650"/>
    <lineage>
        <taxon>Bacteria</taxon>
        <taxon>Pseudomonadati</taxon>
        <taxon>Pseudomonadota</taxon>
        <taxon>Alphaproteobacteria</taxon>
        <taxon>Caulobacterales</taxon>
        <taxon>Caulobacteraceae</taxon>
        <taxon>Caulobacter</taxon>
    </lineage>
</organism>
<sequence>MAKIRVLVVDDSATMRSLISAALNRDPDIEVVGGAGDPFEARGMIKALNPDVVTLDIEMPNMNGIDFLEKIMRLRPMPVVMVSTLTQAGAEMTLRALELGAVDCVGKPADATGTQEALAEIVAKVKIAARASVRTNAGAAPTSAPTRRKDFMPSGDIVAIGSSTGGVEALLSILQLFPETCPPTVITQHMPATFTASFAARLDRSSGAKVQEASDGALLEPGKVYVAPGGATHLEVVRSAGLRCRLVAGDPVSGHRPSVDVLFNSVAHAVGDKAVGVILTGMGRDGAQGLLTMRKAGAKTLGQDEASCVVYGMPRSAFEIGAVERQVSLSSMGQSILDLASARR</sequence>